<evidence type="ECO:0000255" key="1">
    <source>
        <dbReference type="HAMAP-Rule" id="MF_01031"/>
    </source>
</evidence>
<reference key="1">
    <citation type="journal article" date="2007" name="Microbiology">
        <title>Comparative analysis of the Corynebacterium glutamicum group and complete genome sequence of strain R.</title>
        <authorList>
            <person name="Yukawa H."/>
            <person name="Omumasaba C.A."/>
            <person name="Nonaka H."/>
            <person name="Kos P."/>
            <person name="Okai N."/>
            <person name="Suzuki N."/>
            <person name="Suda M."/>
            <person name="Tsuge Y."/>
            <person name="Watanabe J."/>
            <person name="Ikeda Y."/>
            <person name="Vertes A.A."/>
            <person name="Inui M."/>
        </authorList>
    </citation>
    <scope>NUCLEOTIDE SEQUENCE [LARGE SCALE GENOMIC DNA]</scope>
    <source>
        <strain>R</strain>
    </source>
</reference>
<keyword id="KW-0028">Amino-acid biosynthesis</keyword>
<keyword id="KW-0100">Branched-chain amino acid biosynthesis</keyword>
<keyword id="KW-0432">Leucine biosynthesis</keyword>
<keyword id="KW-0456">Lyase</keyword>
<name>LEUD_CORGB</name>
<feature type="chain" id="PRO_1000063753" description="3-isopropylmalate dehydratase small subunit">
    <location>
        <begin position="1"/>
        <end position="197"/>
    </location>
</feature>
<protein>
    <recommendedName>
        <fullName evidence="1">3-isopropylmalate dehydratase small subunit</fullName>
        <ecNumber evidence="1">4.2.1.33</ecNumber>
    </recommendedName>
    <alternativeName>
        <fullName evidence="1">Alpha-IPM isomerase</fullName>
        <shortName evidence="1">IPMI</shortName>
    </alternativeName>
    <alternativeName>
        <fullName evidence="1">Isopropylmalate isomerase</fullName>
    </alternativeName>
</protein>
<proteinExistence type="inferred from homology"/>
<accession>A4QDS9</accession>
<dbReference type="EC" id="4.2.1.33" evidence="1"/>
<dbReference type="EMBL" id="AP009044">
    <property type="protein sequence ID" value="BAF54376.1"/>
    <property type="molecule type" value="Genomic_DNA"/>
</dbReference>
<dbReference type="RefSeq" id="WP_003858856.1">
    <property type="nucleotide sequence ID" value="NC_009342.1"/>
</dbReference>
<dbReference type="SMR" id="A4QDS9"/>
<dbReference type="KEGG" id="cgt:cgR_1391"/>
<dbReference type="HOGENOM" id="CLU_081378_0_1_11"/>
<dbReference type="PhylomeDB" id="A4QDS9"/>
<dbReference type="UniPathway" id="UPA00048">
    <property type="reaction ID" value="UER00071"/>
</dbReference>
<dbReference type="Proteomes" id="UP000006698">
    <property type="component" value="Chromosome"/>
</dbReference>
<dbReference type="GO" id="GO:0009316">
    <property type="term" value="C:3-isopropylmalate dehydratase complex"/>
    <property type="evidence" value="ECO:0007669"/>
    <property type="project" value="InterPro"/>
</dbReference>
<dbReference type="GO" id="GO:0003861">
    <property type="term" value="F:3-isopropylmalate dehydratase activity"/>
    <property type="evidence" value="ECO:0007669"/>
    <property type="project" value="UniProtKB-UniRule"/>
</dbReference>
<dbReference type="GO" id="GO:0009098">
    <property type="term" value="P:L-leucine biosynthetic process"/>
    <property type="evidence" value="ECO:0007669"/>
    <property type="project" value="UniProtKB-UniRule"/>
</dbReference>
<dbReference type="CDD" id="cd01577">
    <property type="entry name" value="IPMI_Swivel"/>
    <property type="match status" value="1"/>
</dbReference>
<dbReference type="FunFam" id="3.20.19.10:FF:000003">
    <property type="entry name" value="3-isopropylmalate dehydratase small subunit"/>
    <property type="match status" value="1"/>
</dbReference>
<dbReference type="Gene3D" id="3.20.19.10">
    <property type="entry name" value="Aconitase, domain 4"/>
    <property type="match status" value="1"/>
</dbReference>
<dbReference type="HAMAP" id="MF_01031">
    <property type="entry name" value="LeuD_type1"/>
    <property type="match status" value="1"/>
</dbReference>
<dbReference type="InterPro" id="IPR004431">
    <property type="entry name" value="3-IsopropMal_deHydase_ssu"/>
</dbReference>
<dbReference type="InterPro" id="IPR015928">
    <property type="entry name" value="Aconitase/3IPM_dehydase_swvl"/>
</dbReference>
<dbReference type="InterPro" id="IPR000573">
    <property type="entry name" value="AconitaseA/IPMdHydase_ssu_swvl"/>
</dbReference>
<dbReference type="InterPro" id="IPR033940">
    <property type="entry name" value="IPMI_Swivel"/>
</dbReference>
<dbReference type="InterPro" id="IPR050075">
    <property type="entry name" value="LeuD"/>
</dbReference>
<dbReference type="NCBIfam" id="TIGR00171">
    <property type="entry name" value="leuD"/>
    <property type="match status" value="1"/>
</dbReference>
<dbReference type="NCBIfam" id="NF002458">
    <property type="entry name" value="PRK01641.1"/>
    <property type="match status" value="1"/>
</dbReference>
<dbReference type="PANTHER" id="PTHR43345:SF5">
    <property type="entry name" value="3-ISOPROPYLMALATE DEHYDRATASE SMALL SUBUNIT"/>
    <property type="match status" value="1"/>
</dbReference>
<dbReference type="PANTHER" id="PTHR43345">
    <property type="entry name" value="3-ISOPROPYLMALATE DEHYDRATASE SMALL SUBUNIT 2-RELATED-RELATED"/>
    <property type="match status" value="1"/>
</dbReference>
<dbReference type="Pfam" id="PF00694">
    <property type="entry name" value="Aconitase_C"/>
    <property type="match status" value="1"/>
</dbReference>
<dbReference type="SUPFAM" id="SSF52016">
    <property type="entry name" value="LeuD/IlvD-like"/>
    <property type="match status" value="1"/>
</dbReference>
<gene>
    <name evidence="1" type="primary">leuD</name>
    <name type="ordered locus">cgR_1391</name>
</gene>
<comment type="function">
    <text evidence="1">Catalyzes the isomerization between 2-isopropylmalate and 3-isopropylmalate, via the formation of 2-isopropylmaleate.</text>
</comment>
<comment type="catalytic activity">
    <reaction evidence="1">
        <text>(2R,3S)-3-isopropylmalate = (2S)-2-isopropylmalate</text>
        <dbReference type="Rhea" id="RHEA:32287"/>
        <dbReference type="ChEBI" id="CHEBI:1178"/>
        <dbReference type="ChEBI" id="CHEBI:35121"/>
        <dbReference type="EC" id="4.2.1.33"/>
    </reaction>
</comment>
<comment type="pathway">
    <text evidence="1">Amino-acid biosynthesis; L-leucine biosynthesis; L-leucine from 3-methyl-2-oxobutanoate: step 2/4.</text>
</comment>
<comment type="subunit">
    <text evidence="1">Heterodimer of LeuC and LeuD.</text>
</comment>
<comment type="similarity">
    <text evidence="1">Belongs to the LeuD family. LeuD type 1 subfamily.</text>
</comment>
<sequence length="197" mass="22183">MEKFTTHTGVGVPLQRSNVDTDQIIPAVYLKRVTRTGFEDGLFSNWRQNDPNFVLNTETYKNGSVLIAGPDFGTGSSREHAVWALMDYGFRAVFSSRFADIFRGNSGKAGLLTGIMEQSDIELLWKLMEQTPGLELTVNLEKQIVTAGDVVISFEVDPYIRWRLMEGLDDAGLTLRKLDEIEDYEAKRPAFKPRTNA</sequence>
<organism>
    <name type="scientific">Corynebacterium glutamicum (strain R)</name>
    <dbReference type="NCBI Taxonomy" id="340322"/>
    <lineage>
        <taxon>Bacteria</taxon>
        <taxon>Bacillati</taxon>
        <taxon>Actinomycetota</taxon>
        <taxon>Actinomycetes</taxon>
        <taxon>Mycobacteriales</taxon>
        <taxon>Corynebacteriaceae</taxon>
        <taxon>Corynebacterium</taxon>
    </lineage>
</organism>